<accession>Q88VK3</accession>
<accession>F9UQ01</accession>
<gene>
    <name evidence="1" type="primary">rimP</name>
    <name type="ordered locus">lp_2044</name>
</gene>
<feature type="chain" id="PRO_0000181882" description="Ribosome maturation factor RimP">
    <location>
        <begin position="1"/>
        <end position="158"/>
    </location>
</feature>
<keyword id="KW-0963">Cytoplasm</keyword>
<keyword id="KW-1185">Reference proteome</keyword>
<keyword id="KW-0690">Ribosome biogenesis</keyword>
<sequence>MSSNVVETIQPVAAAIVSAHQFELVDLEFVREGQSWYLRLYIDKPGGINIEECAMVSDELSEKLDAMEPDPIPQAYFLEVSSPGAERPLKKEADFQNAIGKYVHVGLYQKLDGKKIFEGDLTAVTPTTLTIDYLDKTRHKTVTINREQISQARLAVKF</sequence>
<proteinExistence type="inferred from homology"/>
<reference key="1">
    <citation type="journal article" date="2003" name="Proc. Natl. Acad. Sci. U.S.A.">
        <title>Complete genome sequence of Lactobacillus plantarum WCFS1.</title>
        <authorList>
            <person name="Kleerebezem M."/>
            <person name="Boekhorst J."/>
            <person name="van Kranenburg R."/>
            <person name="Molenaar D."/>
            <person name="Kuipers O.P."/>
            <person name="Leer R."/>
            <person name="Tarchini R."/>
            <person name="Peters S.A."/>
            <person name="Sandbrink H.M."/>
            <person name="Fiers M.W.E.J."/>
            <person name="Stiekema W."/>
            <person name="Klein Lankhorst R.M."/>
            <person name="Bron P.A."/>
            <person name="Hoffer S.M."/>
            <person name="Nierop Groot M.N."/>
            <person name="Kerkhoven R."/>
            <person name="De Vries M."/>
            <person name="Ursing B."/>
            <person name="De Vos W.M."/>
            <person name="Siezen R.J."/>
        </authorList>
    </citation>
    <scope>NUCLEOTIDE SEQUENCE [LARGE SCALE GENOMIC DNA]</scope>
    <source>
        <strain>ATCC BAA-793 / NCIMB 8826 / WCFS1</strain>
    </source>
</reference>
<reference key="2">
    <citation type="journal article" date="2012" name="J. Bacteriol.">
        <title>Complete resequencing and reannotation of the Lactobacillus plantarum WCFS1 genome.</title>
        <authorList>
            <person name="Siezen R.J."/>
            <person name="Francke C."/>
            <person name="Renckens B."/>
            <person name="Boekhorst J."/>
            <person name="Wels M."/>
            <person name="Kleerebezem M."/>
            <person name="van Hijum S.A."/>
        </authorList>
    </citation>
    <scope>NUCLEOTIDE SEQUENCE [LARGE SCALE GENOMIC DNA]</scope>
    <scope>GENOME REANNOTATION</scope>
    <source>
        <strain>ATCC BAA-793 / NCIMB 8826 / WCFS1</strain>
    </source>
</reference>
<comment type="function">
    <text evidence="1">Required for maturation of 30S ribosomal subunits.</text>
</comment>
<comment type="subcellular location">
    <subcellularLocation>
        <location evidence="1">Cytoplasm</location>
    </subcellularLocation>
</comment>
<comment type="similarity">
    <text evidence="1">Belongs to the RimP family.</text>
</comment>
<dbReference type="EMBL" id="AL935263">
    <property type="protein sequence ID" value="CCC79290.1"/>
    <property type="molecule type" value="Genomic_DNA"/>
</dbReference>
<dbReference type="RefSeq" id="WP_003640728.1">
    <property type="nucleotide sequence ID" value="NC_004567.2"/>
</dbReference>
<dbReference type="RefSeq" id="YP_004889804.1">
    <property type="nucleotide sequence ID" value="NC_004567.2"/>
</dbReference>
<dbReference type="SMR" id="Q88VK3"/>
<dbReference type="STRING" id="220668.lp_2044"/>
<dbReference type="EnsemblBacteria" id="CCC79290">
    <property type="protein sequence ID" value="CCC79290"/>
    <property type="gene ID" value="lp_2044"/>
</dbReference>
<dbReference type="GeneID" id="77218366"/>
<dbReference type="KEGG" id="lpl:lp_2044"/>
<dbReference type="PATRIC" id="fig|220668.9.peg.1729"/>
<dbReference type="eggNOG" id="COG0779">
    <property type="taxonomic scope" value="Bacteria"/>
</dbReference>
<dbReference type="HOGENOM" id="CLU_070525_2_0_9"/>
<dbReference type="OrthoDB" id="9805006at2"/>
<dbReference type="PhylomeDB" id="Q88VK3"/>
<dbReference type="Proteomes" id="UP000000432">
    <property type="component" value="Chromosome"/>
</dbReference>
<dbReference type="GO" id="GO:0005829">
    <property type="term" value="C:cytosol"/>
    <property type="evidence" value="ECO:0007669"/>
    <property type="project" value="TreeGrafter"/>
</dbReference>
<dbReference type="GO" id="GO:0000028">
    <property type="term" value="P:ribosomal small subunit assembly"/>
    <property type="evidence" value="ECO:0007669"/>
    <property type="project" value="TreeGrafter"/>
</dbReference>
<dbReference type="GO" id="GO:0006412">
    <property type="term" value="P:translation"/>
    <property type="evidence" value="ECO:0007669"/>
    <property type="project" value="TreeGrafter"/>
</dbReference>
<dbReference type="CDD" id="cd01734">
    <property type="entry name" value="YlxS_C"/>
    <property type="match status" value="1"/>
</dbReference>
<dbReference type="FunFam" id="3.30.300.70:FF:000001">
    <property type="entry name" value="Ribosome maturation factor RimP"/>
    <property type="match status" value="1"/>
</dbReference>
<dbReference type="Gene3D" id="2.30.30.180">
    <property type="entry name" value="Ribosome maturation factor RimP, C-terminal domain"/>
    <property type="match status" value="1"/>
</dbReference>
<dbReference type="Gene3D" id="3.30.300.70">
    <property type="entry name" value="RimP-like superfamily, N-terminal"/>
    <property type="match status" value="1"/>
</dbReference>
<dbReference type="HAMAP" id="MF_01077">
    <property type="entry name" value="RimP"/>
    <property type="match status" value="1"/>
</dbReference>
<dbReference type="InterPro" id="IPR003728">
    <property type="entry name" value="Ribosome_maturation_RimP"/>
</dbReference>
<dbReference type="InterPro" id="IPR028998">
    <property type="entry name" value="RimP_C"/>
</dbReference>
<dbReference type="InterPro" id="IPR036847">
    <property type="entry name" value="RimP_C_sf"/>
</dbReference>
<dbReference type="InterPro" id="IPR028989">
    <property type="entry name" value="RimP_N"/>
</dbReference>
<dbReference type="InterPro" id="IPR035956">
    <property type="entry name" value="RimP_N_sf"/>
</dbReference>
<dbReference type="NCBIfam" id="NF000928">
    <property type="entry name" value="PRK00092.1-2"/>
    <property type="match status" value="1"/>
</dbReference>
<dbReference type="PANTHER" id="PTHR33867">
    <property type="entry name" value="RIBOSOME MATURATION FACTOR RIMP"/>
    <property type="match status" value="1"/>
</dbReference>
<dbReference type="PANTHER" id="PTHR33867:SF1">
    <property type="entry name" value="RIBOSOME MATURATION FACTOR RIMP"/>
    <property type="match status" value="1"/>
</dbReference>
<dbReference type="Pfam" id="PF17384">
    <property type="entry name" value="DUF150_C"/>
    <property type="match status" value="1"/>
</dbReference>
<dbReference type="Pfam" id="PF02576">
    <property type="entry name" value="RimP_N"/>
    <property type="match status" value="1"/>
</dbReference>
<dbReference type="SUPFAM" id="SSF74942">
    <property type="entry name" value="YhbC-like, C-terminal domain"/>
    <property type="match status" value="1"/>
</dbReference>
<dbReference type="SUPFAM" id="SSF75420">
    <property type="entry name" value="YhbC-like, N-terminal domain"/>
    <property type="match status" value="1"/>
</dbReference>
<organism>
    <name type="scientific">Lactiplantibacillus plantarum (strain ATCC BAA-793 / NCIMB 8826 / WCFS1)</name>
    <name type="common">Lactobacillus plantarum</name>
    <dbReference type="NCBI Taxonomy" id="220668"/>
    <lineage>
        <taxon>Bacteria</taxon>
        <taxon>Bacillati</taxon>
        <taxon>Bacillota</taxon>
        <taxon>Bacilli</taxon>
        <taxon>Lactobacillales</taxon>
        <taxon>Lactobacillaceae</taxon>
        <taxon>Lactiplantibacillus</taxon>
    </lineage>
</organism>
<protein>
    <recommendedName>
        <fullName evidence="1">Ribosome maturation factor RimP</fullName>
    </recommendedName>
</protein>
<evidence type="ECO:0000255" key="1">
    <source>
        <dbReference type="HAMAP-Rule" id="MF_01077"/>
    </source>
</evidence>
<name>RIMP_LACPL</name>